<keyword id="KW-0067">ATP-binding</keyword>
<keyword id="KW-0963">Cytoplasm</keyword>
<keyword id="KW-0436">Ligase</keyword>
<keyword id="KW-0460">Magnesium</keyword>
<keyword id="KW-0479">Metal-binding</keyword>
<keyword id="KW-0547">Nucleotide-binding</keyword>
<keyword id="KW-0658">Purine biosynthesis</keyword>
<dbReference type="EC" id="6.3.5.3" evidence="1"/>
<dbReference type="EMBL" id="AE017262">
    <property type="protein sequence ID" value="AAT04565.1"/>
    <property type="molecule type" value="Genomic_DNA"/>
</dbReference>
<dbReference type="RefSeq" id="WP_010958944.1">
    <property type="nucleotide sequence ID" value="NC_002973.6"/>
</dbReference>
<dbReference type="SMR" id="Q71YP9"/>
<dbReference type="KEGG" id="lmf:LMOf2365_1794"/>
<dbReference type="HOGENOM" id="CLU_003100_0_1_9"/>
<dbReference type="UniPathway" id="UPA00074">
    <property type="reaction ID" value="UER00128"/>
</dbReference>
<dbReference type="GO" id="GO:0005737">
    <property type="term" value="C:cytoplasm"/>
    <property type="evidence" value="ECO:0007669"/>
    <property type="project" value="UniProtKB-SubCell"/>
</dbReference>
<dbReference type="GO" id="GO:0005524">
    <property type="term" value="F:ATP binding"/>
    <property type="evidence" value="ECO:0007669"/>
    <property type="project" value="UniProtKB-UniRule"/>
</dbReference>
<dbReference type="GO" id="GO:0000287">
    <property type="term" value="F:magnesium ion binding"/>
    <property type="evidence" value="ECO:0007669"/>
    <property type="project" value="UniProtKB-UniRule"/>
</dbReference>
<dbReference type="GO" id="GO:0004642">
    <property type="term" value="F:phosphoribosylformylglycinamidine synthase activity"/>
    <property type="evidence" value="ECO:0007669"/>
    <property type="project" value="UniProtKB-UniRule"/>
</dbReference>
<dbReference type="GO" id="GO:0006189">
    <property type="term" value="P:'de novo' IMP biosynthetic process"/>
    <property type="evidence" value="ECO:0007669"/>
    <property type="project" value="UniProtKB-UniRule"/>
</dbReference>
<dbReference type="CDD" id="cd02203">
    <property type="entry name" value="PurL_repeat1"/>
    <property type="match status" value="1"/>
</dbReference>
<dbReference type="CDD" id="cd02204">
    <property type="entry name" value="PurL_repeat2"/>
    <property type="match status" value="1"/>
</dbReference>
<dbReference type="FunFam" id="3.30.1330.10:FF:000004">
    <property type="entry name" value="Phosphoribosylformylglycinamidine synthase subunit PurL"/>
    <property type="match status" value="1"/>
</dbReference>
<dbReference type="FunFam" id="3.90.650.10:FF:000009">
    <property type="entry name" value="Phosphoribosylformylglycinamidine synthase subunit PurL"/>
    <property type="match status" value="1"/>
</dbReference>
<dbReference type="FunFam" id="3.90.650.10:FF:000013">
    <property type="entry name" value="Phosphoribosylformylglycinamidine synthase subunit PurL"/>
    <property type="match status" value="1"/>
</dbReference>
<dbReference type="Gene3D" id="3.90.650.10">
    <property type="entry name" value="PurM-like C-terminal domain"/>
    <property type="match status" value="2"/>
</dbReference>
<dbReference type="Gene3D" id="3.30.1330.10">
    <property type="entry name" value="PurM-like, N-terminal domain"/>
    <property type="match status" value="2"/>
</dbReference>
<dbReference type="HAMAP" id="MF_00420">
    <property type="entry name" value="PurL_2"/>
    <property type="match status" value="1"/>
</dbReference>
<dbReference type="InterPro" id="IPR010074">
    <property type="entry name" value="PRibForGlyAmidine_synth_PurL"/>
</dbReference>
<dbReference type="InterPro" id="IPR041609">
    <property type="entry name" value="PurL_linker"/>
</dbReference>
<dbReference type="InterPro" id="IPR010918">
    <property type="entry name" value="PurM-like_C_dom"/>
</dbReference>
<dbReference type="InterPro" id="IPR036676">
    <property type="entry name" value="PurM-like_C_sf"/>
</dbReference>
<dbReference type="InterPro" id="IPR016188">
    <property type="entry name" value="PurM-like_N"/>
</dbReference>
<dbReference type="InterPro" id="IPR036921">
    <property type="entry name" value="PurM-like_N_sf"/>
</dbReference>
<dbReference type="NCBIfam" id="TIGR01736">
    <property type="entry name" value="FGAM_synth_II"/>
    <property type="match status" value="1"/>
</dbReference>
<dbReference type="NCBIfam" id="NF002290">
    <property type="entry name" value="PRK01213.1"/>
    <property type="match status" value="1"/>
</dbReference>
<dbReference type="PANTHER" id="PTHR43555">
    <property type="entry name" value="PHOSPHORIBOSYLFORMYLGLYCINAMIDINE SYNTHASE SUBUNIT PURL"/>
    <property type="match status" value="1"/>
</dbReference>
<dbReference type="PANTHER" id="PTHR43555:SF1">
    <property type="entry name" value="PHOSPHORIBOSYLFORMYLGLYCINAMIDINE SYNTHASE SUBUNIT PURL"/>
    <property type="match status" value="1"/>
</dbReference>
<dbReference type="Pfam" id="PF00586">
    <property type="entry name" value="AIRS"/>
    <property type="match status" value="2"/>
</dbReference>
<dbReference type="Pfam" id="PF02769">
    <property type="entry name" value="AIRS_C"/>
    <property type="match status" value="2"/>
</dbReference>
<dbReference type="Pfam" id="PF18072">
    <property type="entry name" value="FGAR-AT_linker"/>
    <property type="match status" value="1"/>
</dbReference>
<dbReference type="PIRSF" id="PIRSF001587">
    <property type="entry name" value="FGAM_synthase_II"/>
    <property type="match status" value="1"/>
</dbReference>
<dbReference type="SUPFAM" id="SSF56042">
    <property type="entry name" value="PurM C-terminal domain-like"/>
    <property type="match status" value="2"/>
</dbReference>
<dbReference type="SUPFAM" id="SSF55326">
    <property type="entry name" value="PurM N-terminal domain-like"/>
    <property type="match status" value="2"/>
</dbReference>
<name>PURL_LISMF</name>
<organism>
    <name type="scientific">Listeria monocytogenes serotype 4b (strain F2365)</name>
    <dbReference type="NCBI Taxonomy" id="265669"/>
    <lineage>
        <taxon>Bacteria</taxon>
        <taxon>Bacillati</taxon>
        <taxon>Bacillota</taxon>
        <taxon>Bacilli</taxon>
        <taxon>Bacillales</taxon>
        <taxon>Listeriaceae</taxon>
        <taxon>Listeria</taxon>
    </lineage>
</organism>
<comment type="function">
    <text evidence="1">Part of the phosphoribosylformylglycinamidine synthase complex involved in the purines biosynthetic pathway. Catalyzes the ATP-dependent conversion of formylglycinamide ribonucleotide (FGAR) and glutamine to yield formylglycinamidine ribonucleotide (FGAM) and glutamate. The FGAM synthase complex is composed of three subunits. PurQ produces an ammonia molecule by converting glutamine to glutamate. PurL transfers the ammonia molecule to FGAR to form FGAM in an ATP-dependent manner. PurS interacts with PurQ and PurL and is thought to assist in the transfer of the ammonia molecule from PurQ to PurL.</text>
</comment>
<comment type="catalytic activity">
    <reaction evidence="1">
        <text>N(2)-formyl-N(1)-(5-phospho-beta-D-ribosyl)glycinamide + L-glutamine + ATP + H2O = 2-formamido-N(1)-(5-O-phospho-beta-D-ribosyl)acetamidine + L-glutamate + ADP + phosphate + H(+)</text>
        <dbReference type="Rhea" id="RHEA:17129"/>
        <dbReference type="ChEBI" id="CHEBI:15377"/>
        <dbReference type="ChEBI" id="CHEBI:15378"/>
        <dbReference type="ChEBI" id="CHEBI:29985"/>
        <dbReference type="ChEBI" id="CHEBI:30616"/>
        <dbReference type="ChEBI" id="CHEBI:43474"/>
        <dbReference type="ChEBI" id="CHEBI:58359"/>
        <dbReference type="ChEBI" id="CHEBI:147286"/>
        <dbReference type="ChEBI" id="CHEBI:147287"/>
        <dbReference type="ChEBI" id="CHEBI:456216"/>
        <dbReference type="EC" id="6.3.5.3"/>
    </reaction>
</comment>
<comment type="pathway">
    <text evidence="1">Purine metabolism; IMP biosynthesis via de novo pathway; 5-amino-1-(5-phospho-D-ribosyl)imidazole from N(2)-formyl-N(1)-(5-phospho-D-ribosyl)glycinamide: step 1/2.</text>
</comment>
<comment type="subunit">
    <text evidence="1">Monomer. Part of the FGAM synthase complex composed of 1 PurL, 1 PurQ and 2 PurS subunits.</text>
</comment>
<comment type="subcellular location">
    <subcellularLocation>
        <location evidence="1">Cytoplasm</location>
    </subcellularLocation>
</comment>
<comment type="similarity">
    <text evidence="1">Belongs to the FGAMS family.</text>
</comment>
<proteinExistence type="inferred from homology"/>
<feature type="chain" id="PRO_0000100468" description="Phosphoribosylformylglycinamidine synthase subunit PurL">
    <location>
        <begin position="1"/>
        <end position="739"/>
    </location>
</feature>
<feature type="active site" evidence="1">
    <location>
        <position position="53"/>
    </location>
</feature>
<feature type="active site" description="Proton acceptor" evidence="1">
    <location>
        <position position="99"/>
    </location>
</feature>
<feature type="binding site" evidence="1">
    <location>
        <position position="56"/>
    </location>
    <ligand>
        <name>ATP</name>
        <dbReference type="ChEBI" id="CHEBI:30616"/>
    </ligand>
</feature>
<feature type="binding site" evidence="1">
    <location>
        <position position="95"/>
    </location>
    <ligand>
        <name>ATP</name>
        <dbReference type="ChEBI" id="CHEBI:30616"/>
    </ligand>
</feature>
<feature type="binding site" evidence="1">
    <location>
        <position position="97"/>
    </location>
    <ligand>
        <name>Mg(2+)</name>
        <dbReference type="ChEBI" id="CHEBI:18420"/>
        <label>1</label>
    </ligand>
</feature>
<feature type="binding site" evidence="1">
    <location>
        <begin position="98"/>
        <end position="101"/>
    </location>
    <ligand>
        <name>substrate</name>
    </ligand>
</feature>
<feature type="binding site" evidence="1">
    <location>
        <position position="120"/>
    </location>
    <ligand>
        <name>substrate</name>
    </ligand>
</feature>
<feature type="binding site" evidence="1">
    <location>
        <position position="121"/>
    </location>
    <ligand>
        <name>Mg(2+)</name>
        <dbReference type="ChEBI" id="CHEBI:18420"/>
        <label>2</label>
    </ligand>
</feature>
<feature type="binding site" evidence="1">
    <location>
        <position position="244"/>
    </location>
    <ligand>
        <name>substrate</name>
    </ligand>
</feature>
<feature type="binding site" evidence="1">
    <location>
        <position position="274"/>
    </location>
    <ligand>
        <name>Mg(2+)</name>
        <dbReference type="ChEBI" id="CHEBI:18420"/>
        <label>2</label>
    </ligand>
</feature>
<feature type="binding site" evidence="1">
    <location>
        <begin position="318"/>
        <end position="320"/>
    </location>
    <ligand>
        <name>substrate</name>
    </ligand>
</feature>
<feature type="binding site" evidence="1">
    <location>
        <position position="501"/>
    </location>
    <ligand>
        <name>ATP</name>
        <dbReference type="ChEBI" id="CHEBI:30616"/>
    </ligand>
</feature>
<feature type="binding site" evidence="1">
    <location>
        <position position="538"/>
    </location>
    <ligand>
        <name>ATP</name>
        <dbReference type="ChEBI" id="CHEBI:30616"/>
    </ligand>
</feature>
<feature type="binding site" evidence="1">
    <location>
        <position position="539"/>
    </location>
    <ligand>
        <name>Mg(2+)</name>
        <dbReference type="ChEBI" id="CHEBI:18420"/>
        <label>1</label>
    </ligand>
</feature>
<feature type="binding site" evidence="1">
    <location>
        <position position="541"/>
    </location>
    <ligand>
        <name>substrate</name>
    </ligand>
</feature>
<accession>Q71YP9</accession>
<gene>
    <name evidence="1" type="primary">purL</name>
    <name type="ordered locus">LMOf2365_1794</name>
</gene>
<reference key="1">
    <citation type="journal article" date="2004" name="Nucleic Acids Res.">
        <title>Whole genome comparisons of serotype 4b and 1/2a strains of the food-borne pathogen Listeria monocytogenes reveal new insights into the core genome components of this species.</title>
        <authorList>
            <person name="Nelson K.E."/>
            <person name="Fouts D.E."/>
            <person name="Mongodin E.F."/>
            <person name="Ravel J."/>
            <person name="DeBoy R.T."/>
            <person name="Kolonay J.F."/>
            <person name="Rasko D.A."/>
            <person name="Angiuoli S.V."/>
            <person name="Gill S.R."/>
            <person name="Paulsen I.T."/>
            <person name="Peterson J.D."/>
            <person name="White O."/>
            <person name="Nelson W.C."/>
            <person name="Nierman W.C."/>
            <person name="Beanan M.J."/>
            <person name="Brinkac L.M."/>
            <person name="Daugherty S.C."/>
            <person name="Dodson R.J."/>
            <person name="Durkin A.S."/>
            <person name="Madupu R."/>
            <person name="Haft D.H."/>
            <person name="Selengut J."/>
            <person name="Van Aken S.E."/>
            <person name="Khouri H.M."/>
            <person name="Fedorova N."/>
            <person name="Forberger H.A."/>
            <person name="Tran B."/>
            <person name="Kathariou S."/>
            <person name="Wonderling L.D."/>
            <person name="Uhlich G.A."/>
            <person name="Bayles D.O."/>
            <person name="Luchansky J.B."/>
            <person name="Fraser C.M."/>
        </authorList>
    </citation>
    <scope>NUCLEOTIDE SEQUENCE [LARGE SCALE GENOMIC DNA]</scope>
    <source>
        <strain>F2365</strain>
    </source>
</reference>
<protein>
    <recommendedName>
        <fullName evidence="1">Phosphoribosylformylglycinamidine synthase subunit PurL</fullName>
        <shortName evidence="1">FGAM synthase</shortName>
        <ecNumber evidence="1">6.3.5.3</ecNumber>
    </recommendedName>
    <alternativeName>
        <fullName evidence="1">Formylglycinamide ribonucleotide amidotransferase subunit II</fullName>
        <shortName evidence="1">FGAR amidotransferase II</shortName>
        <shortName evidence="1">FGAR-AT II</shortName>
    </alternativeName>
    <alternativeName>
        <fullName evidence="1">Glutamine amidotransferase PurL</fullName>
    </alternativeName>
    <alternativeName>
        <fullName evidence="1">Phosphoribosylformylglycinamidine synthase subunit II</fullName>
    </alternativeName>
</protein>
<evidence type="ECO:0000255" key="1">
    <source>
        <dbReference type="HAMAP-Rule" id="MF_00420"/>
    </source>
</evidence>
<sequence>MPNMEPTTKEIKEQKIYQEMGLTDSEYELVCSILGREPNYTETGLFSVMWSEHCSYKNSKPVLRKFPTEGKQVLQGPGEGAGIVDIGDGLGVAFKVESHNHPSYVEPYQGAATGVGGIIRDVFSMGARPIAMLNSLRFGELDTPHAKYLVSEVVAGIAGYGNSIGIPTVGGEIQFDPCYTKNPLVNAMCVGLIEAKDIQKGQAKGIGNPVMYVGAKTGRDGIHGATFASVEFSEEGEQQRSAVQVGDPFMEKLLLEACLDVIRDHSDILVGIQDMGAAGLVSSSSEMASKAGAGLELIMDDVPQRELNMTPYEMLLSESQERMLLCVKKGHVEEIQALFERYGLEAVVIGQVTDDKMYKIIHHGEVVANVPVDALAEDAPVYHKPSKEPARYQAFQEEESFVPVMEDVVGVWKELLAQPTIASKRHIYEQYDYQVRTDTAVVPGSDAAIVRVRGTEKAIAMTTDCNSRYLYLDPKVGGAIAVAEAARNIVCSGGKPLAITDGLNFGNPEKPEIFWEIEKAADGISAACLELDTPVISGNVSLYNETDGTGIYPTPVIGMVGLVEDLAHITTQDFKNSGDVIFLIGETKAEYSGSELQKLQQGKISGRAPELDLTTEKKYQQLLLTAIQEGLVASSHDLAEGGFGVALAEATFKAGLGADVEVPFELNQLFSESQSRFLVSVKPENEAAFAQLMELEKVYRLGVVTEDDTIRVKHKEDQVTAKTTELRSIWQGAIPCLLK</sequence>